<protein>
    <recommendedName>
        <fullName evidence="1">2-isopropylmalate synthase</fullName>
        <ecNumber evidence="1">2.3.3.13</ecNumber>
    </recommendedName>
    <alternativeName>
        <fullName evidence="1">Alpha-IPM synthase</fullName>
    </alternativeName>
    <alternativeName>
        <fullName evidence="1">Alpha-isopropylmalate synthase</fullName>
    </alternativeName>
</protein>
<reference key="1">
    <citation type="submission" date="2007-08" db="EMBL/GenBank/DDBJ databases">
        <title>Complete sequence of Shewanella sediminis HAW-EB3.</title>
        <authorList>
            <consortium name="US DOE Joint Genome Institute"/>
            <person name="Copeland A."/>
            <person name="Lucas S."/>
            <person name="Lapidus A."/>
            <person name="Barry K."/>
            <person name="Glavina del Rio T."/>
            <person name="Dalin E."/>
            <person name="Tice H."/>
            <person name="Pitluck S."/>
            <person name="Chertkov O."/>
            <person name="Brettin T."/>
            <person name="Bruce D."/>
            <person name="Detter J.C."/>
            <person name="Han C."/>
            <person name="Schmutz J."/>
            <person name="Larimer F."/>
            <person name="Land M."/>
            <person name="Hauser L."/>
            <person name="Kyrpides N."/>
            <person name="Kim E."/>
            <person name="Zhao J.-S."/>
            <person name="Richardson P."/>
        </authorList>
    </citation>
    <scope>NUCLEOTIDE SEQUENCE [LARGE SCALE GENOMIC DNA]</scope>
    <source>
        <strain>HAW-EB3</strain>
    </source>
</reference>
<keyword id="KW-0028">Amino-acid biosynthesis</keyword>
<keyword id="KW-0100">Branched-chain amino acid biosynthesis</keyword>
<keyword id="KW-0963">Cytoplasm</keyword>
<keyword id="KW-0432">Leucine biosynthesis</keyword>
<keyword id="KW-0464">Manganese</keyword>
<keyword id="KW-0479">Metal-binding</keyword>
<keyword id="KW-1185">Reference proteome</keyword>
<keyword id="KW-0808">Transferase</keyword>
<accession>A8FQ83</accession>
<gene>
    <name evidence="1" type="primary">leuA</name>
    <name type="ordered locus">Ssed_0393</name>
</gene>
<evidence type="ECO:0000255" key="1">
    <source>
        <dbReference type="HAMAP-Rule" id="MF_01025"/>
    </source>
</evidence>
<dbReference type="EC" id="2.3.3.13" evidence="1"/>
<dbReference type="EMBL" id="CP000821">
    <property type="protein sequence ID" value="ABV35006.1"/>
    <property type="molecule type" value="Genomic_DNA"/>
</dbReference>
<dbReference type="RefSeq" id="WP_012140743.1">
    <property type="nucleotide sequence ID" value="NC_009831.1"/>
</dbReference>
<dbReference type="SMR" id="A8FQ83"/>
<dbReference type="STRING" id="425104.Ssed_0393"/>
<dbReference type="KEGG" id="sse:Ssed_0393"/>
<dbReference type="eggNOG" id="COG0119">
    <property type="taxonomic scope" value="Bacteria"/>
</dbReference>
<dbReference type="HOGENOM" id="CLU_022158_0_1_6"/>
<dbReference type="OrthoDB" id="9803573at2"/>
<dbReference type="UniPathway" id="UPA00048">
    <property type="reaction ID" value="UER00070"/>
</dbReference>
<dbReference type="Proteomes" id="UP000002015">
    <property type="component" value="Chromosome"/>
</dbReference>
<dbReference type="GO" id="GO:0005829">
    <property type="term" value="C:cytosol"/>
    <property type="evidence" value="ECO:0007669"/>
    <property type="project" value="TreeGrafter"/>
</dbReference>
<dbReference type="GO" id="GO:0003852">
    <property type="term" value="F:2-isopropylmalate synthase activity"/>
    <property type="evidence" value="ECO:0007669"/>
    <property type="project" value="UniProtKB-UniRule"/>
</dbReference>
<dbReference type="GO" id="GO:0003985">
    <property type="term" value="F:acetyl-CoA C-acetyltransferase activity"/>
    <property type="evidence" value="ECO:0007669"/>
    <property type="project" value="UniProtKB-UniRule"/>
</dbReference>
<dbReference type="GO" id="GO:0030145">
    <property type="term" value="F:manganese ion binding"/>
    <property type="evidence" value="ECO:0007669"/>
    <property type="project" value="UniProtKB-UniRule"/>
</dbReference>
<dbReference type="GO" id="GO:0009098">
    <property type="term" value="P:L-leucine biosynthetic process"/>
    <property type="evidence" value="ECO:0007669"/>
    <property type="project" value="UniProtKB-UniRule"/>
</dbReference>
<dbReference type="CDD" id="cd07940">
    <property type="entry name" value="DRE_TIM_IPMS"/>
    <property type="match status" value="1"/>
</dbReference>
<dbReference type="FunFam" id="1.10.238.260:FF:000001">
    <property type="entry name" value="2-isopropylmalate synthase"/>
    <property type="match status" value="1"/>
</dbReference>
<dbReference type="FunFam" id="3.20.20.70:FF:000010">
    <property type="entry name" value="2-isopropylmalate synthase"/>
    <property type="match status" value="1"/>
</dbReference>
<dbReference type="FunFam" id="3.30.160.270:FF:000001">
    <property type="entry name" value="2-isopropylmalate synthase"/>
    <property type="match status" value="1"/>
</dbReference>
<dbReference type="Gene3D" id="1.10.238.260">
    <property type="match status" value="1"/>
</dbReference>
<dbReference type="Gene3D" id="3.30.160.270">
    <property type="match status" value="1"/>
</dbReference>
<dbReference type="Gene3D" id="3.20.20.70">
    <property type="entry name" value="Aldolase class I"/>
    <property type="match status" value="1"/>
</dbReference>
<dbReference type="HAMAP" id="MF_01025">
    <property type="entry name" value="LeuA_type1"/>
    <property type="match status" value="1"/>
</dbReference>
<dbReference type="InterPro" id="IPR050073">
    <property type="entry name" value="2-IPM_HCS-like"/>
</dbReference>
<dbReference type="InterPro" id="IPR013709">
    <property type="entry name" value="2-isopropylmalate_synth_dimer"/>
</dbReference>
<dbReference type="InterPro" id="IPR002034">
    <property type="entry name" value="AIPM/Hcit_synth_CS"/>
</dbReference>
<dbReference type="InterPro" id="IPR013785">
    <property type="entry name" value="Aldolase_TIM"/>
</dbReference>
<dbReference type="InterPro" id="IPR054691">
    <property type="entry name" value="LeuA/HCS_post-cat"/>
</dbReference>
<dbReference type="InterPro" id="IPR036230">
    <property type="entry name" value="LeuA_allosteric_dom_sf"/>
</dbReference>
<dbReference type="InterPro" id="IPR005671">
    <property type="entry name" value="LeuA_bact_synth"/>
</dbReference>
<dbReference type="InterPro" id="IPR000891">
    <property type="entry name" value="PYR_CT"/>
</dbReference>
<dbReference type="NCBIfam" id="TIGR00973">
    <property type="entry name" value="leuA_bact"/>
    <property type="match status" value="1"/>
</dbReference>
<dbReference type="NCBIfam" id="NF002084">
    <property type="entry name" value="PRK00915.1-1"/>
    <property type="match status" value="1"/>
</dbReference>
<dbReference type="NCBIfam" id="NF002086">
    <property type="entry name" value="PRK00915.1-3"/>
    <property type="match status" value="1"/>
</dbReference>
<dbReference type="PANTHER" id="PTHR10277:SF9">
    <property type="entry name" value="2-ISOPROPYLMALATE SYNTHASE 1, CHLOROPLASTIC-RELATED"/>
    <property type="match status" value="1"/>
</dbReference>
<dbReference type="PANTHER" id="PTHR10277">
    <property type="entry name" value="HOMOCITRATE SYNTHASE-RELATED"/>
    <property type="match status" value="1"/>
</dbReference>
<dbReference type="Pfam" id="PF22617">
    <property type="entry name" value="HCS_D2"/>
    <property type="match status" value="1"/>
</dbReference>
<dbReference type="Pfam" id="PF00682">
    <property type="entry name" value="HMGL-like"/>
    <property type="match status" value="1"/>
</dbReference>
<dbReference type="Pfam" id="PF08502">
    <property type="entry name" value="LeuA_dimer"/>
    <property type="match status" value="1"/>
</dbReference>
<dbReference type="SMART" id="SM00917">
    <property type="entry name" value="LeuA_dimer"/>
    <property type="match status" value="1"/>
</dbReference>
<dbReference type="SUPFAM" id="SSF110921">
    <property type="entry name" value="2-isopropylmalate synthase LeuA, allosteric (dimerisation) domain"/>
    <property type="match status" value="1"/>
</dbReference>
<dbReference type="SUPFAM" id="SSF51569">
    <property type="entry name" value="Aldolase"/>
    <property type="match status" value="1"/>
</dbReference>
<dbReference type="PROSITE" id="PS00815">
    <property type="entry name" value="AIPM_HOMOCIT_SYNTH_1"/>
    <property type="match status" value="1"/>
</dbReference>
<dbReference type="PROSITE" id="PS00816">
    <property type="entry name" value="AIPM_HOMOCIT_SYNTH_2"/>
    <property type="match status" value="1"/>
</dbReference>
<dbReference type="PROSITE" id="PS50991">
    <property type="entry name" value="PYR_CT"/>
    <property type="match status" value="1"/>
</dbReference>
<name>LEU1_SHESH</name>
<feature type="chain" id="PRO_1000149290" description="2-isopropylmalate synthase">
    <location>
        <begin position="1"/>
        <end position="523"/>
    </location>
</feature>
<feature type="domain" description="Pyruvate carboxyltransferase" evidence="1">
    <location>
        <begin position="5"/>
        <end position="267"/>
    </location>
</feature>
<feature type="region of interest" description="Regulatory domain" evidence="1">
    <location>
        <begin position="392"/>
        <end position="523"/>
    </location>
</feature>
<feature type="binding site" evidence="1">
    <location>
        <position position="14"/>
    </location>
    <ligand>
        <name>Mn(2+)</name>
        <dbReference type="ChEBI" id="CHEBI:29035"/>
    </ligand>
</feature>
<feature type="binding site" evidence="1">
    <location>
        <position position="202"/>
    </location>
    <ligand>
        <name>Mn(2+)</name>
        <dbReference type="ChEBI" id="CHEBI:29035"/>
    </ligand>
</feature>
<feature type="binding site" evidence="1">
    <location>
        <position position="204"/>
    </location>
    <ligand>
        <name>Mn(2+)</name>
        <dbReference type="ChEBI" id="CHEBI:29035"/>
    </ligand>
</feature>
<feature type="binding site" evidence="1">
    <location>
        <position position="238"/>
    </location>
    <ligand>
        <name>Mn(2+)</name>
        <dbReference type="ChEBI" id="CHEBI:29035"/>
    </ligand>
</feature>
<proteinExistence type="inferred from homology"/>
<organism>
    <name type="scientific">Shewanella sediminis (strain HAW-EB3)</name>
    <dbReference type="NCBI Taxonomy" id="425104"/>
    <lineage>
        <taxon>Bacteria</taxon>
        <taxon>Pseudomonadati</taxon>
        <taxon>Pseudomonadota</taxon>
        <taxon>Gammaproteobacteria</taxon>
        <taxon>Alteromonadales</taxon>
        <taxon>Shewanellaceae</taxon>
        <taxon>Shewanella</taxon>
    </lineage>
</organism>
<sequence length="523" mass="56773">MSNRVIIFDTTLRDGEQALAASLTVKEKLQIALSLERLGVDVMEVGFPVSSPGDFNSVQTIANTVKNSRVCALARALEKDIDAAAQSLSVADQFRIHTFISTSTIHVESKLKRSFDQVLEMAVGAVKYARRFTDDVEFSCEDAGRTPIDNLCRMVEEAIKAGARTINIPDTVGYTIPSEFGGIIETLFNRVPNIDQAIISVHCHDDLGLSVANSITAVQQGARQIECTVNGIGERAGNCSLEEIAMILSTRKDSLGLETGINAKEIHRTSNLVSQLCNMPVQANKAIVGANAFTHSSGIHQDGMLKSQNTYEIMTPESIGLHRNNLNMTSRSGRHVIKHRMEEMGYGNKDYDMDTLYEAFLQLADKKGQVFDYDLEALAFMEAQVDEEADYKLAQLVVHSDSTEGNATATVKLEIDGKTVTEAATGNGPVDAAYNAIARASQCEVNITSYKLSAKGEGQNALGQVDIEANYNEQSFHGVGLATDVVEASVQALVHVMNLTSRADKVADCKEKIQKDRSELGGV</sequence>
<comment type="function">
    <text evidence="1">Catalyzes the condensation of the acetyl group of acetyl-CoA with 3-methyl-2-oxobutanoate (2-ketoisovalerate) to form 3-carboxy-3-hydroxy-4-methylpentanoate (2-isopropylmalate).</text>
</comment>
<comment type="catalytic activity">
    <reaction evidence="1">
        <text>3-methyl-2-oxobutanoate + acetyl-CoA + H2O = (2S)-2-isopropylmalate + CoA + H(+)</text>
        <dbReference type="Rhea" id="RHEA:21524"/>
        <dbReference type="ChEBI" id="CHEBI:1178"/>
        <dbReference type="ChEBI" id="CHEBI:11851"/>
        <dbReference type="ChEBI" id="CHEBI:15377"/>
        <dbReference type="ChEBI" id="CHEBI:15378"/>
        <dbReference type="ChEBI" id="CHEBI:57287"/>
        <dbReference type="ChEBI" id="CHEBI:57288"/>
        <dbReference type="EC" id="2.3.3.13"/>
    </reaction>
</comment>
<comment type="cofactor">
    <cofactor evidence="1">
        <name>Mn(2+)</name>
        <dbReference type="ChEBI" id="CHEBI:29035"/>
    </cofactor>
</comment>
<comment type="pathway">
    <text evidence="1">Amino-acid biosynthesis; L-leucine biosynthesis; L-leucine from 3-methyl-2-oxobutanoate: step 1/4.</text>
</comment>
<comment type="subunit">
    <text evidence="1">Homodimer.</text>
</comment>
<comment type="subcellular location">
    <subcellularLocation>
        <location evidence="1">Cytoplasm</location>
    </subcellularLocation>
</comment>
<comment type="similarity">
    <text evidence="1">Belongs to the alpha-IPM synthase/homocitrate synthase family. LeuA type 1 subfamily.</text>
</comment>